<accession>A7MB43</accession>
<feature type="chain" id="PRO_0000446365" description="Myotubularin-related protein 9">
    <location>
        <begin position="1"/>
        <end position="549"/>
    </location>
</feature>
<feature type="domain" description="GRAM" evidence="3">
    <location>
        <begin position="4"/>
        <end position="99"/>
    </location>
</feature>
<feature type="domain" description="Myotubularin phosphatase" evidence="4">
    <location>
        <begin position="123"/>
        <end position="498"/>
    </location>
</feature>
<feature type="coiled-coil region" evidence="3">
    <location>
        <begin position="508"/>
        <end position="542"/>
    </location>
</feature>
<feature type="modified residue" description="N-acetylmethionine" evidence="1">
    <location>
        <position position="1"/>
    </location>
</feature>
<feature type="modified residue" description="Phosphoserine" evidence="1">
    <location>
        <position position="548"/>
    </location>
</feature>
<organism evidence="6">
    <name type="scientific">Bos taurus</name>
    <name type="common">Bovine</name>
    <dbReference type="NCBI Taxonomy" id="9913"/>
    <lineage>
        <taxon>Eukaryota</taxon>
        <taxon>Metazoa</taxon>
        <taxon>Chordata</taxon>
        <taxon>Craniata</taxon>
        <taxon>Vertebrata</taxon>
        <taxon>Euteleostomi</taxon>
        <taxon>Mammalia</taxon>
        <taxon>Eutheria</taxon>
        <taxon>Laurasiatheria</taxon>
        <taxon>Artiodactyla</taxon>
        <taxon>Ruminantia</taxon>
        <taxon>Pecora</taxon>
        <taxon>Bovidae</taxon>
        <taxon>Bovinae</taxon>
        <taxon>Bos</taxon>
    </lineage>
</organism>
<comment type="function">
    <text evidence="1 2">Acts as an adapter for myotubularin-related phosphatases. Increases lipid phosphatase MTMR6 catalytic activity, specifically towards phosphatidylinositol 3,5-bisphosphate, and MTMR6 binding affinity for phosphorylated phosphatidylinositols (By similarity). Positively regulates lipid phosphatase MTMR7 catalytic activity (By similarity). Increases MTMR8 catalytic activity towards phosphatidylinositol 3-phosphate. The formation of the MTMR6-MTMR9 complex, stabilizes both MTMR6 and MTMR9 protein levels. Stabilizes MTMR8 protein levels. Plays a role in the late stages of macropinocytosis possibly by regulating MTMR6-mediated dephosphorylation of phosphatidylinositol 3-phosphate in membrane ruffles. Negatively regulates autophagy, in part via its association with MTMR8. Negatively regulates DNA damage-induced apoptosis, in part via its association with MTMR6. Does not bind mono-, di- and tri-phosphorylated phosphatidylinositols, phosphatidic acid and phosphatidylserine (By similarity).</text>
</comment>
<comment type="subunit">
    <text evidence="1 2">Homodimer. Heterodimer (via C-terminus) with lipid phosphatase MTMR6 (via C-terminus) (By similarity). Heterodimer (via coiled coil domain) with lipid phosphatase MTMR7 (via C-terminus) (By similarity). Heterodimer with lipid phosphatase MTMR8 (By similarity).</text>
</comment>
<comment type="subcellular location">
    <subcellularLocation>
        <location evidence="1">Cytoplasm</location>
    </subcellularLocation>
    <subcellularLocation>
        <location evidence="2">Cell projection</location>
        <location evidence="2">Ruffle membrane</location>
        <topology evidence="1">Peripheral membrane protein</topology>
        <orientation evidence="1">Cytoplasmic side</orientation>
    </subcellularLocation>
    <subcellularLocation>
        <location evidence="1">Cytoplasm</location>
        <location evidence="1">Perinuclear region</location>
    </subcellularLocation>
    <subcellularLocation>
        <location evidence="1">Endoplasmic reticulum</location>
    </subcellularLocation>
    <text evidence="1 2">Localizes to ruffles during EGF-induced macropinocytosis (By similarity). Colocalizes with MTMR6 to the perinuclear region. Partially localizes to the endoplasmic reticulum (By similarity).</text>
</comment>
<comment type="domain">
    <text evidence="2">The GRAM domain is required for cell membrane localization.</text>
</comment>
<comment type="domain">
    <text evidence="2">The coiled coil domain mediates interaction with MTMR9.</text>
</comment>
<comment type="similarity">
    <text evidence="3">Belongs to the protein-tyrosine phosphatase family. Non-receptor class myotubularin subfamily.</text>
</comment>
<comment type="caution">
    <text evidence="5">Although it belongs to the non-receptor class myotubularin subfamily, lacks the conserved active site cysteine residue at position 333 in the dsPTPase catalytic loop, suggesting that it has no phosphatase activity.</text>
</comment>
<proteinExistence type="evidence at transcript level"/>
<reference evidence="6" key="1">
    <citation type="submission" date="2007-07" db="EMBL/GenBank/DDBJ databases">
        <authorList>
            <person name="Moore S."/>
            <person name="Alexander L."/>
            <person name="Brownstein M."/>
            <person name="Guan L."/>
            <person name="Lobo S."/>
            <person name="Meng Y."/>
            <person name="Tanaguchi M."/>
            <person name="Wang Z."/>
            <person name="Yu J."/>
            <person name="Prange C."/>
            <person name="Schreiber K."/>
            <person name="Shenmen C."/>
            <person name="Wagner L."/>
            <person name="Bala M."/>
            <person name="Barbazuk S."/>
            <person name="Barber S."/>
            <person name="Babakaiff R."/>
            <person name="Beland J."/>
            <person name="Chun E."/>
            <person name="Del Rio L."/>
            <person name="Gibson S."/>
            <person name="Hanson R."/>
            <person name="Kirkpatrick R."/>
            <person name="Liu J."/>
            <person name="Matsuo C."/>
            <person name="Mayo M."/>
            <person name="Santos R.R."/>
            <person name="Stott J."/>
            <person name="Tsai M."/>
            <person name="Wong D."/>
            <person name="Siddiqui A."/>
            <person name="Holt R."/>
            <person name="Jones S.J."/>
            <person name="Marra M.A."/>
        </authorList>
    </citation>
    <scope>NUCLEOTIDE SEQUENCE [MRNA]</scope>
    <source>
        <strain evidence="6">Hereford</strain>
        <tissue evidence="6">Fetal brain</tissue>
    </source>
</reference>
<reference evidence="7" key="2">
    <citation type="journal article" date="2009" name="Genome Biol.">
        <title>A whole-genome assembly of the domestic cow, Bos taurus.</title>
        <authorList>
            <person name="Zimin A.V."/>
            <person name="Delcher A.L."/>
            <person name="Florea L."/>
            <person name="Kelley D.R."/>
            <person name="Schatz M.C."/>
            <person name="Puiu D."/>
            <person name="Hanrahan F."/>
            <person name="Pertea G."/>
            <person name="Van Tassell C.P."/>
            <person name="Sonstegard T.S."/>
            <person name="Marcais G."/>
            <person name="Roberts M."/>
            <person name="Subramanian P."/>
            <person name="Yorke J.A."/>
            <person name="Salzberg S.L."/>
        </authorList>
    </citation>
    <scope>NUCLEOTIDE SEQUENCE [LARGE SCALE GENOMIC DNA]</scope>
    <source>
        <strain evidence="7">Hereford</strain>
    </source>
</reference>
<sequence length="549" mass="63486">MEFAELIKTPRVDNVVLHRPFYPAVEGTLCLTGHHLILSSRQDNTEELWLLHSNIDAIDKRFVGPLGTIIIKCKDFRIIQLDIPGMEECLNIASSIEALSTLDSITLMYPFFYRPMFEVIEDGWHSFLPEQEFELYSSTISEWRLSYVNKEFSVCPSYPPAVIVPKAIDDDALRKVATFRHGGRFPVLSYYHKKNGMVIMRSGQPLTGTNGRRCKEDEKLINATLRAGKRGYIIDTRPLNIAQQARAKGGGFEQEAHYPQWRRIHKSIDRYHILQESLIKLVESCNDQTQNMDRWLSKLEASNWLTHIKEILTTACLAAQCLDREGASILIHGTEGTDSTLQVTSLAQIILEPRSRTIRGFEALIEREWLQAGHPFQQRCAQSAYCNSKQKWESPVFLLFLDCVWQILRQFPCSFEFNENFLIMLFEHAYASQFGTFLGNNESERCKLKLQQKTMSLWSWVNRPSELSKFTNPLFEANNLVIWPSVAPQSLQLWEGIFLRWNRSSKYLDEAYEEMVNIIEYNKELQAKVNLLRRQLAELETEDGVQESP</sequence>
<dbReference type="EMBL" id="BC151329">
    <property type="protein sequence ID" value="AAI51330.1"/>
    <property type="molecule type" value="mRNA"/>
</dbReference>
<dbReference type="EMBL" id="DAAA02021925">
    <property type="status" value="NOT_ANNOTATED_CDS"/>
    <property type="molecule type" value="Genomic_DNA"/>
</dbReference>
<dbReference type="RefSeq" id="NP_001094657.1">
    <property type="nucleotide sequence ID" value="NM_001101187.2"/>
</dbReference>
<dbReference type="SMR" id="A7MB43"/>
<dbReference type="FunCoup" id="A7MB43">
    <property type="interactions" value="3795"/>
</dbReference>
<dbReference type="STRING" id="9913.ENSBTAP00000004852"/>
<dbReference type="PaxDb" id="9913-ENSBTAP00000004852"/>
<dbReference type="GeneID" id="539174"/>
<dbReference type="KEGG" id="bta:539174"/>
<dbReference type="CTD" id="66036"/>
<dbReference type="VEuPathDB" id="HostDB:ENSBTAG00000003726"/>
<dbReference type="eggNOG" id="KOG1089">
    <property type="taxonomic scope" value="Eukaryota"/>
</dbReference>
<dbReference type="HOGENOM" id="CLU_001839_3_1_1"/>
<dbReference type="InParanoid" id="A7MB43"/>
<dbReference type="OMA" id="IEREWIC"/>
<dbReference type="OrthoDB" id="271628at2759"/>
<dbReference type="TreeFam" id="TF315197"/>
<dbReference type="Reactome" id="R-BTA-1660499">
    <property type="pathway name" value="Synthesis of PIPs at the plasma membrane"/>
</dbReference>
<dbReference type="Proteomes" id="UP000009136">
    <property type="component" value="Chromosome 8"/>
</dbReference>
<dbReference type="Bgee" id="ENSBTAG00000003726">
    <property type="expression patterns" value="Expressed in semen and 108 other cell types or tissues"/>
</dbReference>
<dbReference type="GO" id="GO:0005737">
    <property type="term" value="C:cytoplasm"/>
    <property type="evidence" value="ECO:0000318"/>
    <property type="project" value="GO_Central"/>
</dbReference>
<dbReference type="GO" id="GO:0005783">
    <property type="term" value="C:endoplasmic reticulum"/>
    <property type="evidence" value="ECO:0007669"/>
    <property type="project" value="UniProtKB-SubCell"/>
</dbReference>
<dbReference type="GO" id="GO:0048471">
    <property type="term" value="C:perinuclear region of cytoplasm"/>
    <property type="evidence" value="ECO:0007669"/>
    <property type="project" value="UniProtKB-SubCell"/>
</dbReference>
<dbReference type="GO" id="GO:0032587">
    <property type="term" value="C:ruffle membrane"/>
    <property type="evidence" value="ECO:0007669"/>
    <property type="project" value="UniProtKB-SubCell"/>
</dbReference>
<dbReference type="GO" id="GO:0019903">
    <property type="term" value="F:protein phosphatase binding"/>
    <property type="evidence" value="ECO:0000318"/>
    <property type="project" value="GO_Central"/>
</dbReference>
<dbReference type="GO" id="GO:0010507">
    <property type="term" value="P:negative regulation of autophagy"/>
    <property type="evidence" value="ECO:0000318"/>
    <property type="project" value="GO_Central"/>
</dbReference>
<dbReference type="GO" id="GO:0046856">
    <property type="term" value="P:phosphatidylinositol dephosphorylation"/>
    <property type="evidence" value="ECO:0000318"/>
    <property type="project" value="GO_Central"/>
</dbReference>
<dbReference type="CDD" id="cd13211">
    <property type="entry name" value="PH-GRAM_MTMR9"/>
    <property type="match status" value="1"/>
</dbReference>
<dbReference type="CDD" id="cd14536">
    <property type="entry name" value="PTP-MTMR9"/>
    <property type="match status" value="1"/>
</dbReference>
<dbReference type="FunFam" id="2.30.29.30:FF:000240">
    <property type="entry name" value="Myotubularin-related protein 9"/>
    <property type="match status" value="1"/>
</dbReference>
<dbReference type="Gene3D" id="2.30.29.30">
    <property type="entry name" value="Pleckstrin-homology domain (PH domain)/Phosphotyrosine-binding domain (PTB)"/>
    <property type="match status" value="1"/>
</dbReference>
<dbReference type="InterPro" id="IPR030564">
    <property type="entry name" value="Myotubularin"/>
</dbReference>
<dbReference type="InterPro" id="IPR010569">
    <property type="entry name" value="Myotubularin-like_Pase_dom"/>
</dbReference>
<dbReference type="InterPro" id="IPR011993">
    <property type="entry name" value="PH-like_dom_sf"/>
</dbReference>
<dbReference type="InterPro" id="IPR029021">
    <property type="entry name" value="Prot-tyrosine_phosphatase-like"/>
</dbReference>
<dbReference type="PANTHER" id="PTHR10807">
    <property type="entry name" value="MYOTUBULARIN-RELATED"/>
    <property type="match status" value="1"/>
</dbReference>
<dbReference type="PANTHER" id="PTHR10807:SF56">
    <property type="entry name" value="MYOTUBULARIN-RELATED PROTEIN 9"/>
    <property type="match status" value="1"/>
</dbReference>
<dbReference type="Pfam" id="PF06602">
    <property type="entry name" value="Myotub-related"/>
    <property type="match status" value="1"/>
</dbReference>
<dbReference type="Pfam" id="PF21098">
    <property type="entry name" value="PH-GRAM_MTMR6-like"/>
    <property type="match status" value="1"/>
</dbReference>
<dbReference type="SUPFAM" id="SSF52799">
    <property type="entry name" value="(Phosphotyrosine protein) phosphatases II"/>
    <property type="match status" value="1"/>
</dbReference>
<dbReference type="SUPFAM" id="SSF50729">
    <property type="entry name" value="PH domain-like"/>
    <property type="match status" value="1"/>
</dbReference>
<dbReference type="PROSITE" id="PS51339">
    <property type="entry name" value="PPASE_MYOTUBULARIN"/>
    <property type="match status" value="1"/>
</dbReference>
<keyword id="KW-0007">Acetylation</keyword>
<keyword id="KW-1003">Cell membrane</keyword>
<keyword id="KW-0966">Cell projection</keyword>
<keyword id="KW-0175">Coiled coil</keyword>
<keyword id="KW-0963">Cytoplasm</keyword>
<keyword id="KW-0256">Endoplasmic reticulum</keyword>
<keyword id="KW-0472">Membrane</keyword>
<keyword id="KW-0597">Phosphoprotein</keyword>
<keyword id="KW-1185">Reference proteome</keyword>
<gene>
    <name type="primary">MTMR9</name>
</gene>
<name>MTMR9_BOVIN</name>
<evidence type="ECO:0000250" key="1">
    <source>
        <dbReference type="UniProtKB" id="Q96QG7"/>
    </source>
</evidence>
<evidence type="ECO:0000250" key="2">
    <source>
        <dbReference type="UniProtKB" id="Q9Z2D0"/>
    </source>
</evidence>
<evidence type="ECO:0000255" key="3"/>
<evidence type="ECO:0000255" key="4">
    <source>
        <dbReference type="PROSITE-ProRule" id="PRU00669"/>
    </source>
</evidence>
<evidence type="ECO:0000305" key="5"/>
<evidence type="ECO:0000312" key="6">
    <source>
        <dbReference type="EMBL" id="AAI51330.1"/>
    </source>
</evidence>
<evidence type="ECO:0000312" key="7">
    <source>
        <dbReference type="Proteomes" id="UP000009136"/>
    </source>
</evidence>
<protein>
    <recommendedName>
        <fullName evidence="5">Myotubularin-related protein 9</fullName>
    </recommendedName>
    <alternativeName>
        <fullName evidence="5">Inactive phosphatidylinositol 3-phosphatase 9</fullName>
    </alternativeName>
</protein>